<proteinExistence type="inferred from homology"/>
<comment type="function">
    <text evidence="1">One of the primary rRNA binding proteins, it binds directly to 16S rRNA central domain where it helps coordinate assembly of the platform of the 30S subunit.</text>
</comment>
<comment type="subunit">
    <text evidence="1">Part of the 30S ribosomal subunit. Contacts proteins S5 and S12.</text>
</comment>
<comment type="similarity">
    <text evidence="1">Belongs to the universal ribosomal protein uS8 family.</text>
</comment>
<gene>
    <name evidence="1" type="primary">rpsH</name>
    <name evidence="1" type="synonym">rps8</name>
    <name type="ordered locus">NATL1_19901</name>
</gene>
<accession>A2C4Y6</accession>
<feature type="chain" id="PRO_0000290902" description="Small ribosomal subunit protein uS8">
    <location>
        <begin position="1"/>
        <end position="133"/>
    </location>
</feature>
<feature type="region of interest" description="Disordered" evidence="2">
    <location>
        <begin position="1"/>
        <end position="28"/>
    </location>
</feature>
<feature type="compositionally biased region" description="Basic and acidic residues" evidence="2">
    <location>
        <begin position="16"/>
        <end position="26"/>
    </location>
</feature>
<evidence type="ECO:0000255" key="1">
    <source>
        <dbReference type="HAMAP-Rule" id="MF_01302"/>
    </source>
</evidence>
<evidence type="ECO:0000256" key="2">
    <source>
        <dbReference type="SAM" id="MobiDB-lite"/>
    </source>
</evidence>
<evidence type="ECO:0000305" key="3"/>
<reference key="1">
    <citation type="journal article" date="2007" name="PLoS Genet.">
        <title>Patterns and implications of gene gain and loss in the evolution of Prochlorococcus.</title>
        <authorList>
            <person name="Kettler G.C."/>
            <person name="Martiny A.C."/>
            <person name="Huang K."/>
            <person name="Zucker J."/>
            <person name="Coleman M.L."/>
            <person name="Rodrigue S."/>
            <person name="Chen F."/>
            <person name="Lapidus A."/>
            <person name="Ferriera S."/>
            <person name="Johnson J."/>
            <person name="Steglich C."/>
            <person name="Church G.M."/>
            <person name="Richardson P."/>
            <person name="Chisholm S.W."/>
        </authorList>
    </citation>
    <scope>NUCLEOTIDE SEQUENCE [LARGE SCALE GENOMIC DNA]</scope>
    <source>
        <strain>NATL1A</strain>
    </source>
</reference>
<name>RS8_PROM1</name>
<protein>
    <recommendedName>
        <fullName evidence="1">Small ribosomal subunit protein uS8</fullName>
    </recommendedName>
    <alternativeName>
        <fullName evidence="3">30S ribosomal protein S8</fullName>
    </alternativeName>
</protein>
<sequence>MANHDPISDMLTRIRNASEKRHEKTKVPASRMSLSIAKVLQSEGFIAEINEEGEGFRKQLILGLKYTGKHRSPIIRSMQRVSRPGLRIYKNTRGLPKVLGGLGIAIISTSNGVMSDRDARKQGVGGEVLCYVC</sequence>
<organism>
    <name type="scientific">Prochlorococcus marinus (strain NATL1A)</name>
    <dbReference type="NCBI Taxonomy" id="167555"/>
    <lineage>
        <taxon>Bacteria</taxon>
        <taxon>Bacillati</taxon>
        <taxon>Cyanobacteriota</taxon>
        <taxon>Cyanophyceae</taxon>
        <taxon>Synechococcales</taxon>
        <taxon>Prochlorococcaceae</taxon>
        <taxon>Prochlorococcus</taxon>
    </lineage>
</organism>
<keyword id="KW-0687">Ribonucleoprotein</keyword>
<keyword id="KW-0689">Ribosomal protein</keyword>
<keyword id="KW-0694">RNA-binding</keyword>
<keyword id="KW-0699">rRNA-binding</keyword>
<dbReference type="EMBL" id="CP000553">
    <property type="protein sequence ID" value="ABM76546.1"/>
    <property type="molecule type" value="Genomic_DNA"/>
</dbReference>
<dbReference type="RefSeq" id="WP_011824507.1">
    <property type="nucleotide sequence ID" value="NC_008819.1"/>
</dbReference>
<dbReference type="SMR" id="A2C4Y6"/>
<dbReference type="KEGG" id="pme:NATL1_19901"/>
<dbReference type="eggNOG" id="COG0096">
    <property type="taxonomic scope" value="Bacteria"/>
</dbReference>
<dbReference type="HOGENOM" id="CLU_098428_0_2_3"/>
<dbReference type="Proteomes" id="UP000002592">
    <property type="component" value="Chromosome"/>
</dbReference>
<dbReference type="GO" id="GO:1990904">
    <property type="term" value="C:ribonucleoprotein complex"/>
    <property type="evidence" value="ECO:0007669"/>
    <property type="project" value="UniProtKB-KW"/>
</dbReference>
<dbReference type="GO" id="GO:0005840">
    <property type="term" value="C:ribosome"/>
    <property type="evidence" value="ECO:0007669"/>
    <property type="project" value="UniProtKB-KW"/>
</dbReference>
<dbReference type="GO" id="GO:0019843">
    <property type="term" value="F:rRNA binding"/>
    <property type="evidence" value="ECO:0007669"/>
    <property type="project" value="UniProtKB-UniRule"/>
</dbReference>
<dbReference type="GO" id="GO:0003735">
    <property type="term" value="F:structural constituent of ribosome"/>
    <property type="evidence" value="ECO:0007669"/>
    <property type="project" value="InterPro"/>
</dbReference>
<dbReference type="GO" id="GO:0006412">
    <property type="term" value="P:translation"/>
    <property type="evidence" value="ECO:0007669"/>
    <property type="project" value="UniProtKB-UniRule"/>
</dbReference>
<dbReference type="FunFam" id="3.30.1370.30:FF:000002">
    <property type="entry name" value="30S ribosomal protein S8"/>
    <property type="match status" value="1"/>
</dbReference>
<dbReference type="FunFam" id="3.30.1490.10:FF:000001">
    <property type="entry name" value="30S ribosomal protein S8"/>
    <property type="match status" value="1"/>
</dbReference>
<dbReference type="Gene3D" id="3.30.1370.30">
    <property type="match status" value="1"/>
</dbReference>
<dbReference type="Gene3D" id="3.30.1490.10">
    <property type="match status" value="1"/>
</dbReference>
<dbReference type="HAMAP" id="MF_01302_B">
    <property type="entry name" value="Ribosomal_uS8_B"/>
    <property type="match status" value="1"/>
</dbReference>
<dbReference type="InterPro" id="IPR000630">
    <property type="entry name" value="Ribosomal_uS8"/>
</dbReference>
<dbReference type="InterPro" id="IPR047863">
    <property type="entry name" value="Ribosomal_uS8_CS"/>
</dbReference>
<dbReference type="InterPro" id="IPR035987">
    <property type="entry name" value="Ribosomal_uS8_sf"/>
</dbReference>
<dbReference type="NCBIfam" id="NF001109">
    <property type="entry name" value="PRK00136.1"/>
    <property type="match status" value="1"/>
</dbReference>
<dbReference type="PANTHER" id="PTHR11758">
    <property type="entry name" value="40S RIBOSOMAL PROTEIN S15A"/>
    <property type="match status" value="1"/>
</dbReference>
<dbReference type="Pfam" id="PF00410">
    <property type="entry name" value="Ribosomal_S8"/>
    <property type="match status" value="1"/>
</dbReference>
<dbReference type="SUPFAM" id="SSF56047">
    <property type="entry name" value="Ribosomal protein S8"/>
    <property type="match status" value="1"/>
</dbReference>
<dbReference type="PROSITE" id="PS00053">
    <property type="entry name" value="RIBOSOMAL_S8"/>
    <property type="match status" value="1"/>
</dbReference>